<protein>
    <recommendedName>
        <fullName evidence="1">UPF0102 protein BMA2801</fullName>
    </recommendedName>
</protein>
<keyword id="KW-1185">Reference proteome</keyword>
<evidence type="ECO:0000255" key="1">
    <source>
        <dbReference type="HAMAP-Rule" id="MF_00048"/>
    </source>
</evidence>
<evidence type="ECO:0000256" key="2">
    <source>
        <dbReference type="SAM" id="MobiDB-lite"/>
    </source>
</evidence>
<evidence type="ECO:0000305" key="3"/>
<gene>
    <name type="ordered locus">BMA2801</name>
</gene>
<dbReference type="EMBL" id="CP000010">
    <property type="protein sequence ID" value="AAU47961.1"/>
    <property type="status" value="ALT_INIT"/>
    <property type="molecule type" value="Genomic_DNA"/>
</dbReference>
<dbReference type="RefSeq" id="WP_004196859.1">
    <property type="nucleotide sequence ID" value="NC_006348.1"/>
</dbReference>
<dbReference type="RefSeq" id="YP_104317.1">
    <property type="nucleotide sequence ID" value="NC_006348.1"/>
</dbReference>
<dbReference type="SMR" id="Q62G58"/>
<dbReference type="KEGG" id="bma:BMA2801"/>
<dbReference type="PATRIC" id="fig|243160.12.peg.2869"/>
<dbReference type="eggNOG" id="COG0792">
    <property type="taxonomic scope" value="Bacteria"/>
</dbReference>
<dbReference type="HOGENOM" id="CLU_115353_1_0_4"/>
<dbReference type="Proteomes" id="UP000006693">
    <property type="component" value="Chromosome 1"/>
</dbReference>
<dbReference type="GO" id="GO:0003676">
    <property type="term" value="F:nucleic acid binding"/>
    <property type="evidence" value="ECO:0007669"/>
    <property type="project" value="InterPro"/>
</dbReference>
<dbReference type="Gene3D" id="3.40.1350.10">
    <property type="match status" value="1"/>
</dbReference>
<dbReference type="HAMAP" id="MF_00048">
    <property type="entry name" value="UPF0102"/>
    <property type="match status" value="1"/>
</dbReference>
<dbReference type="InterPro" id="IPR011335">
    <property type="entry name" value="Restrct_endonuc-II-like"/>
</dbReference>
<dbReference type="InterPro" id="IPR011856">
    <property type="entry name" value="tRNA_endonuc-like_dom_sf"/>
</dbReference>
<dbReference type="InterPro" id="IPR003509">
    <property type="entry name" value="UPF0102_YraN-like"/>
</dbReference>
<dbReference type="NCBIfam" id="NF009150">
    <property type="entry name" value="PRK12497.1-3"/>
    <property type="match status" value="1"/>
</dbReference>
<dbReference type="NCBIfam" id="TIGR00252">
    <property type="entry name" value="YraN family protein"/>
    <property type="match status" value="1"/>
</dbReference>
<dbReference type="PANTHER" id="PTHR34039">
    <property type="entry name" value="UPF0102 PROTEIN YRAN"/>
    <property type="match status" value="1"/>
</dbReference>
<dbReference type="PANTHER" id="PTHR34039:SF1">
    <property type="entry name" value="UPF0102 PROTEIN YRAN"/>
    <property type="match status" value="1"/>
</dbReference>
<dbReference type="Pfam" id="PF02021">
    <property type="entry name" value="UPF0102"/>
    <property type="match status" value="1"/>
</dbReference>
<dbReference type="SUPFAM" id="SSF52980">
    <property type="entry name" value="Restriction endonuclease-like"/>
    <property type="match status" value="1"/>
</dbReference>
<proteinExistence type="inferred from homology"/>
<feature type="chain" id="PRO_0000336140" description="UPF0102 protein BMA2801">
    <location>
        <begin position="1"/>
        <end position="144"/>
    </location>
</feature>
<feature type="region of interest" description="Disordered" evidence="2">
    <location>
        <begin position="1"/>
        <end position="28"/>
    </location>
</feature>
<name>Y2801_BURMA</name>
<sequence>MCHAREASPGTGEPEAAPRDNFPRAAGSKRGVGAAFETRAQRFLERAGLALVARNVTVRGGEIDLVMRERDGTLVFVEVRARANSRYGGAAASIGVRKRMRLLLAAHAFWARTGGANACRFDVVAFEGGRLVWLRDAFRADDAG</sequence>
<comment type="similarity">
    <text evidence="1">Belongs to the UPF0102 family.</text>
</comment>
<comment type="sequence caution" evidence="3">
    <conflict type="erroneous initiation">
        <sequence resource="EMBL-CDS" id="AAU47961"/>
    </conflict>
</comment>
<accession>Q62G58</accession>
<organism>
    <name type="scientific">Burkholderia mallei (strain ATCC 23344)</name>
    <dbReference type="NCBI Taxonomy" id="243160"/>
    <lineage>
        <taxon>Bacteria</taxon>
        <taxon>Pseudomonadati</taxon>
        <taxon>Pseudomonadota</taxon>
        <taxon>Betaproteobacteria</taxon>
        <taxon>Burkholderiales</taxon>
        <taxon>Burkholderiaceae</taxon>
        <taxon>Burkholderia</taxon>
        <taxon>pseudomallei group</taxon>
    </lineage>
</organism>
<reference key="1">
    <citation type="journal article" date="2004" name="Proc. Natl. Acad. Sci. U.S.A.">
        <title>Structural flexibility in the Burkholderia mallei genome.</title>
        <authorList>
            <person name="Nierman W.C."/>
            <person name="DeShazer D."/>
            <person name="Kim H.S."/>
            <person name="Tettelin H."/>
            <person name="Nelson K.E."/>
            <person name="Feldblyum T.V."/>
            <person name="Ulrich R.L."/>
            <person name="Ronning C.M."/>
            <person name="Brinkac L.M."/>
            <person name="Daugherty S.C."/>
            <person name="Davidsen T.D."/>
            <person name="DeBoy R.T."/>
            <person name="Dimitrov G."/>
            <person name="Dodson R.J."/>
            <person name="Durkin A.S."/>
            <person name="Gwinn M.L."/>
            <person name="Haft D.H."/>
            <person name="Khouri H.M."/>
            <person name="Kolonay J.F."/>
            <person name="Madupu R."/>
            <person name="Mohammoud Y."/>
            <person name="Nelson W.C."/>
            <person name="Radune D."/>
            <person name="Romero C.M."/>
            <person name="Sarria S."/>
            <person name="Selengut J."/>
            <person name="Shamblin C."/>
            <person name="Sullivan S.A."/>
            <person name="White O."/>
            <person name="Yu Y."/>
            <person name="Zafar N."/>
            <person name="Zhou L."/>
            <person name="Fraser C.M."/>
        </authorList>
    </citation>
    <scope>NUCLEOTIDE SEQUENCE [LARGE SCALE GENOMIC DNA]</scope>
    <source>
        <strain>ATCC 23344</strain>
    </source>
</reference>